<proteinExistence type="evidence at protein level"/>
<keyword id="KW-0903">Direct protein sequencing</keyword>
<keyword id="KW-0964">Secreted</keyword>
<keyword id="KW-0800">Toxin</keyword>
<accession>B3EWU9</accession>
<evidence type="ECO:0000269" key="1">
    <source>
    </source>
</evidence>
<evidence type="ECO:0000303" key="2">
    <source>
    </source>
</evidence>
<evidence type="ECO:0000303" key="3">
    <source ref="2"/>
</evidence>
<evidence type="ECO:0000305" key="4"/>
<evidence type="ECO:0000305" key="5">
    <source>
    </source>
</evidence>
<name>TXC5A_CUPSA</name>
<sequence length="24" mass="2684">KFGKVLKFLAKTLAKHLAKKQAQS</sequence>
<protein>
    <recommendedName>
        <fullName evidence="3">Cupiennin-5a</fullName>
        <shortName evidence="3">Cu-5a</shortName>
    </recommendedName>
    <alternativeName>
        <fullName evidence="2">Short cationic peptide-7a</fullName>
        <shortName evidence="2">SCP-7a</shortName>
    </alternativeName>
</protein>
<organism>
    <name type="scientific">Cupiennius salei</name>
    <name type="common">American wandering spider</name>
    <dbReference type="NCBI Taxonomy" id="6928"/>
    <lineage>
        <taxon>Eukaryota</taxon>
        <taxon>Metazoa</taxon>
        <taxon>Ecdysozoa</taxon>
        <taxon>Arthropoda</taxon>
        <taxon>Chelicerata</taxon>
        <taxon>Arachnida</taxon>
        <taxon>Araneae</taxon>
        <taxon>Araneomorphae</taxon>
        <taxon>Entelegynae</taxon>
        <taxon>Lycosoidea</taxon>
        <taxon>Ctenidae</taxon>
        <taxon>Cupiennius</taxon>
    </lineage>
</organism>
<reference key="1">
    <citation type="journal article" date="2012" name="FEBS J.">
        <title>Multicomponent venom of the spider Cupiennius salei: a bioanalytical investigation applying different strategies.</title>
        <authorList>
            <person name="Trachsel C."/>
            <person name="Siegemund D."/>
            <person name="Kampfer U."/>
            <person name="Kopp L.S."/>
            <person name="Buhr C."/>
            <person name="Grossmann J."/>
            <person name="Luthi C."/>
            <person name="Cunningham M."/>
            <person name="Nentwig W."/>
            <person name="Kuhn-Nentwig L."/>
            <person name="Schurch S."/>
            <person name="Schaller J."/>
        </authorList>
    </citation>
    <scope>PROTEIN SEQUENCE</scope>
    <scope>MASS SPECTROMETRY</scope>
    <source>
        <tissue>Venom</tissue>
    </source>
</reference>
<reference key="2">
    <citation type="unpublished observations" date="2015-06">
        <authorList>
            <person name="Kuhn-Nentwig L."/>
            <person name="Gohel T."/>
        </authorList>
    </citation>
    <scope>NOMENCLATURE</scope>
</reference>
<feature type="peptide" id="PRO_0000421220" description="Cupiennin-5a" evidence="1">
    <location>
        <begin position="1"/>
        <end position="24"/>
    </location>
</feature>
<comment type="subcellular location">
    <subcellularLocation>
        <location evidence="1">Secreted</location>
    </subcellularLocation>
</comment>
<comment type="tissue specificity">
    <text evidence="5">Expressed by the venom gland.</text>
</comment>
<comment type="mass spectrometry" mass="2682.641" method="Electrospray" evidence="1"/>
<comment type="similarity">
    <text evidence="4">Belongs to the cationic peptide 04 (cupiennin) family. 05 subfamily.</text>
</comment>
<dbReference type="TCDB" id="8.B.10.2.2">
    <property type="family name" value="the psalmotoxin-1 (pctx1) family"/>
</dbReference>
<dbReference type="GO" id="GO:0005576">
    <property type="term" value="C:extracellular region"/>
    <property type="evidence" value="ECO:0007669"/>
    <property type="project" value="UniProtKB-SubCell"/>
</dbReference>
<dbReference type="GO" id="GO:0090729">
    <property type="term" value="F:toxin activity"/>
    <property type="evidence" value="ECO:0007669"/>
    <property type="project" value="UniProtKB-KW"/>
</dbReference>